<feature type="signal peptide" evidence="3">
    <location>
        <begin position="1"/>
        <end position="24"/>
    </location>
</feature>
<feature type="chain" id="PRO_0000017159" description="Lipopolysaccharide-binding protein">
    <location>
        <begin position="25"/>
        <end position="481"/>
    </location>
</feature>
<feature type="glycosylation site" description="N-linked (GlcNAc...) asparagine" evidence="3">
    <location>
        <position position="300"/>
    </location>
</feature>
<feature type="glycosylation site" description="N-linked (GlcNAc...) asparagine" evidence="3">
    <location>
        <position position="355"/>
    </location>
</feature>
<feature type="disulfide bond" evidence="4 8">
    <location>
        <begin position="159"/>
        <end position="198"/>
    </location>
</feature>
<feature type="sequence conflict" description="In Ref. 1; CAA67727." evidence="7" ref="1">
    <original>G</original>
    <variation>C</variation>
    <location>
        <position position="25"/>
    </location>
</feature>
<feature type="sequence conflict" description="In Ref. 1; CAA67727." evidence="7" ref="1">
    <original>Q</original>
    <variation>K</variation>
    <location>
        <position position="51"/>
    </location>
</feature>
<feature type="sequence conflict" description="In Ref. 1; CAA67727." evidence="7" ref="1">
    <original>S</original>
    <variation>R</variation>
    <location>
        <position position="102"/>
    </location>
</feature>
<feature type="sequence conflict" description="In Ref. 3; AAH04795." evidence="7" ref="3">
    <original>A</original>
    <variation>S</variation>
    <location>
        <position position="280"/>
    </location>
</feature>
<feature type="sequence conflict" description="In Ref. 1; CAA67727 and 3; AAH04795." evidence="7" ref="1 3">
    <original>Y</original>
    <variation>H</variation>
    <location>
        <position position="284"/>
    </location>
</feature>
<feature type="sequence conflict" description="In Ref. 3; AAH04795." evidence="7" ref="3">
    <original>H</original>
    <variation>P</variation>
    <location>
        <position position="310"/>
    </location>
</feature>
<feature type="sequence conflict" description="In Ref. 3; AAH04795." evidence="7" ref="3">
    <original>G</original>
    <variation>S</variation>
    <location>
        <position position="313"/>
    </location>
</feature>
<feature type="sequence conflict" description="In Ref. 1; CAA67727." evidence="7" ref="1">
    <original>G</original>
    <variation>R</variation>
    <location>
        <position position="341"/>
    </location>
</feature>
<feature type="sequence conflict" description="In Ref. 1; CAA67727." evidence="7" ref="1">
    <original>G</original>
    <variation>S</variation>
    <location>
        <position position="382"/>
    </location>
</feature>
<feature type="sequence conflict" description="In Ref. 1; CAA67727." evidence="7" ref="1">
    <original>NS</original>
    <variation>TR</variation>
    <location>
        <begin position="395"/>
        <end position="396"/>
    </location>
</feature>
<feature type="sequence conflict" description="In Ref. 1; CAA67727." evidence="7" ref="1">
    <original>M</original>
    <variation>I</variation>
    <location>
        <position position="418"/>
    </location>
</feature>
<feature type="strand" evidence="9">
    <location>
        <begin position="29"/>
        <end position="35"/>
    </location>
</feature>
<feature type="helix" evidence="9">
    <location>
        <begin position="36"/>
        <end position="54"/>
    </location>
</feature>
<feature type="strand" evidence="9">
    <location>
        <begin position="62"/>
        <end position="68"/>
    </location>
</feature>
<feature type="turn" evidence="9">
    <location>
        <begin position="69"/>
        <end position="71"/>
    </location>
</feature>
<feature type="strand" evidence="9">
    <location>
        <begin position="72"/>
        <end position="87"/>
    </location>
</feature>
<feature type="strand" evidence="9">
    <location>
        <begin position="91"/>
        <end position="96"/>
    </location>
</feature>
<feature type="turn" evidence="9">
    <location>
        <begin position="97"/>
        <end position="99"/>
    </location>
</feature>
<feature type="strand" evidence="9">
    <location>
        <begin position="100"/>
        <end position="119"/>
    </location>
</feature>
<feature type="strand" evidence="9">
    <location>
        <begin position="127"/>
        <end position="146"/>
    </location>
</feature>
<feature type="strand" evidence="9">
    <location>
        <begin position="152"/>
        <end position="162"/>
    </location>
</feature>
<feature type="strand" evidence="9">
    <location>
        <begin position="166"/>
        <end position="170"/>
    </location>
</feature>
<feature type="helix" evidence="9">
    <location>
        <begin position="175"/>
        <end position="184"/>
    </location>
</feature>
<feature type="helix" evidence="9">
    <location>
        <begin position="186"/>
        <end position="207"/>
    </location>
</feature>
<feature type="helix" evidence="9">
    <location>
        <begin position="209"/>
        <end position="213"/>
    </location>
</feature>
<feature type="strand" evidence="9">
    <location>
        <begin position="218"/>
        <end position="221"/>
    </location>
</feature>
<feature type="strand" evidence="9">
    <location>
        <begin position="223"/>
        <end position="225"/>
    </location>
</feature>
<feature type="strand" evidence="9">
    <location>
        <begin position="227"/>
        <end position="229"/>
    </location>
</feature>
<feature type="strand" evidence="9">
    <location>
        <begin position="232"/>
        <end position="235"/>
    </location>
</feature>
<feature type="strand" evidence="9">
    <location>
        <begin position="240"/>
        <end position="247"/>
    </location>
</feature>
<feature type="strand" evidence="9">
    <location>
        <begin position="254"/>
        <end position="256"/>
    </location>
</feature>
<feature type="strand" evidence="9">
    <location>
        <begin position="274"/>
        <end position="281"/>
    </location>
</feature>
<feature type="strand" evidence="9">
    <location>
        <begin position="285"/>
        <end position="287"/>
    </location>
</feature>
<feature type="strand" evidence="9">
    <location>
        <begin position="300"/>
        <end position="304"/>
    </location>
</feature>
<feature type="helix" evidence="9">
    <location>
        <begin position="305"/>
        <end position="307"/>
    </location>
</feature>
<feature type="strand" evidence="9">
    <location>
        <begin position="310"/>
        <end position="312"/>
    </location>
</feature>
<feature type="turn" evidence="9">
    <location>
        <begin position="318"/>
        <end position="320"/>
    </location>
</feature>
<feature type="turn" evidence="9">
    <location>
        <begin position="322"/>
        <end position="324"/>
    </location>
</feature>
<feature type="helix" evidence="9">
    <location>
        <begin position="328"/>
        <end position="331"/>
    </location>
</feature>
<feature type="strand" evidence="9">
    <location>
        <begin position="336"/>
        <end position="345"/>
    </location>
</feature>
<feature type="strand" evidence="9">
    <location>
        <begin position="350"/>
        <end position="352"/>
    </location>
</feature>
<feature type="strand" evidence="9">
    <location>
        <begin position="355"/>
        <end position="358"/>
    </location>
</feature>
<feature type="strand" evidence="9">
    <location>
        <begin position="361"/>
        <end position="369"/>
    </location>
</feature>
<feature type="strand" evidence="9">
    <location>
        <begin position="373"/>
        <end position="394"/>
    </location>
</feature>
<feature type="strand" evidence="9">
    <location>
        <begin position="397"/>
        <end position="417"/>
    </location>
</feature>
<feature type="helix" evidence="9">
    <location>
        <begin position="421"/>
        <end position="434"/>
    </location>
</feature>
<feature type="helix" evidence="9">
    <location>
        <begin position="436"/>
        <end position="446"/>
    </location>
</feature>
<feature type="strand" evidence="9">
    <location>
        <begin position="456"/>
        <end position="465"/>
    </location>
</feature>
<feature type="strand" evidence="9">
    <location>
        <begin position="467"/>
        <end position="478"/>
    </location>
</feature>
<protein>
    <recommendedName>
        <fullName>Lipopolysaccharide-binding protein</fullName>
        <shortName>LBP</shortName>
    </recommendedName>
</protein>
<proteinExistence type="evidence at protein level"/>
<dbReference type="EMBL" id="X99347">
    <property type="protein sequence ID" value="CAA67727.1"/>
    <property type="molecule type" value="mRNA"/>
</dbReference>
<dbReference type="EMBL" id="AL663063">
    <property type="status" value="NOT_ANNOTATED_CDS"/>
    <property type="molecule type" value="Genomic_DNA"/>
</dbReference>
<dbReference type="EMBL" id="CH466551">
    <property type="protein sequence ID" value="EDL06262.1"/>
    <property type="molecule type" value="Genomic_DNA"/>
</dbReference>
<dbReference type="EMBL" id="BC004795">
    <property type="protein sequence ID" value="AAH04795.1"/>
    <property type="molecule type" value="mRNA"/>
</dbReference>
<dbReference type="CCDS" id="CCDS16988.1"/>
<dbReference type="RefSeq" id="NP_032515.2">
    <property type="nucleotide sequence ID" value="NM_008489.2"/>
</dbReference>
<dbReference type="PDB" id="4M4D">
    <property type="method" value="X-ray"/>
    <property type="resolution" value="2.91 A"/>
    <property type="chains" value="A/B=25-481"/>
</dbReference>
<dbReference type="PDBsum" id="4M4D"/>
<dbReference type="SMR" id="Q61805"/>
<dbReference type="FunCoup" id="Q61805">
    <property type="interactions" value="126"/>
</dbReference>
<dbReference type="STRING" id="10090.ENSMUSP00000016168"/>
<dbReference type="GlyCosmos" id="Q61805">
    <property type="glycosylation" value="2 sites, No reported glycans"/>
</dbReference>
<dbReference type="GlyGen" id="Q61805">
    <property type="glycosylation" value="5 sites, 1 N-linked glycan (1 site)"/>
</dbReference>
<dbReference type="iPTMnet" id="Q61805"/>
<dbReference type="PhosphoSitePlus" id="Q61805"/>
<dbReference type="CPTAC" id="non-CPTAC-3555"/>
<dbReference type="CPTAC" id="non-CPTAC-3836"/>
<dbReference type="jPOST" id="Q61805"/>
<dbReference type="PaxDb" id="10090-ENSMUSP00000016168"/>
<dbReference type="PeptideAtlas" id="Q61805"/>
<dbReference type="ProteomicsDB" id="264845"/>
<dbReference type="Antibodypedia" id="777">
    <property type="antibodies" value="404 antibodies from 37 providers"/>
</dbReference>
<dbReference type="DNASU" id="16803"/>
<dbReference type="Ensembl" id="ENSMUST00000016168.9">
    <property type="protein sequence ID" value="ENSMUSP00000016168.3"/>
    <property type="gene ID" value="ENSMUSG00000016024.10"/>
</dbReference>
<dbReference type="GeneID" id="16803"/>
<dbReference type="KEGG" id="mmu:16803"/>
<dbReference type="UCSC" id="uc008npz.1">
    <property type="organism name" value="mouse"/>
</dbReference>
<dbReference type="AGR" id="MGI:1098776"/>
<dbReference type="CTD" id="3929"/>
<dbReference type="MGI" id="MGI:1098776">
    <property type="gene designation" value="Lbp"/>
</dbReference>
<dbReference type="VEuPathDB" id="HostDB:ENSMUSG00000016024"/>
<dbReference type="eggNOG" id="KOG4160">
    <property type="taxonomic scope" value="Eukaryota"/>
</dbReference>
<dbReference type="GeneTree" id="ENSGT01130000278326"/>
<dbReference type="HOGENOM" id="CLU_028970_3_2_1"/>
<dbReference type="InParanoid" id="Q61805"/>
<dbReference type="OMA" id="KMHIRAG"/>
<dbReference type="OrthoDB" id="10255543at2759"/>
<dbReference type="PhylomeDB" id="Q61805"/>
<dbReference type="TreeFam" id="TF315617"/>
<dbReference type="Reactome" id="R-MMU-166016">
    <property type="pathway name" value="Toll Like Receptor 4 (TLR4) Cascade"/>
</dbReference>
<dbReference type="Reactome" id="R-MMU-166020">
    <property type="pathway name" value="Transfer of LPS from LBP carrier to CD14"/>
</dbReference>
<dbReference type="Reactome" id="R-MMU-5686938">
    <property type="pathway name" value="Regulation of TLR by endogenous ligand"/>
</dbReference>
<dbReference type="BioGRID-ORCS" id="16803">
    <property type="hits" value="1 hit in 79 CRISPR screens"/>
</dbReference>
<dbReference type="ChiTaRS" id="Lbp">
    <property type="organism name" value="mouse"/>
</dbReference>
<dbReference type="EvolutionaryTrace" id="Q61805"/>
<dbReference type="PRO" id="PR:Q61805"/>
<dbReference type="Proteomes" id="UP000000589">
    <property type="component" value="Chromosome 2"/>
</dbReference>
<dbReference type="RNAct" id="Q61805">
    <property type="molecule type" value="protein"/>
</dbReference>
<dbReference type="Bgee" id="ENSMUSG00000016024">
    <property type="expression patterns" value="Expressed in gastrula and 176 other cell types or tissues"/>
</dbReference>
<dbReference type="ExpressionAtlas" id="Q61805">
    <property type="expression patterns" value="baseline and differential"/>
</dbReference>
<dbReference type="GO" id="GO:0009986">
    <property type="term" value="C:cell surface"/>
    <property type="evidence" value="ECO:0000314"/>
    <property type="project" value="BHF-UCL"/>
</dbReference>
<dbReference type="GO" id="GO:0005615">
    <property type="term" value="C:extracellular space"/>
    <property type="evidence" value="ECO:0000314"/>
    <property type="project" value="BHF-UCL"/>
</dbReference>
<dbReference type="GO" id="GO:0016020">
    <property type="term" value="C:membrane"/>
    <property type="evidence" value="ECO:0007669"/>
    <property type="project" value="UniProtKB-KW"/>
</dbReference>
<dbReference type="GO" id="GO:0015026">
    <property type="term" value="F:coreceptor activity"/>
    <property type="evidence" value="ECO:0007669"/>
    <property type="project" value="Ensembl"/>
</dbReference>
<dbReference type="GO" id="GO:0071723">
    <property type="term" value="F:lipopeptide binding"/>
    <property type="evidence" value="ECO:0007669"/>
    <property type="project" value="Ensembl"/>
</dbReference>
<dbReference type="GO" id="GO:0001530">
    <property type="term" value="F:lipopolysaccharide binding"/>
    <property type="evidence" value="ECO:0000314"/>
    <property type="project" value="MGI"/>
</dbReference>
<dbReference type="GO" id="GO:0070891">
    <property type="term" value="F:lipoteichoic acid binding"/>
    <property type="evidence" value="ECO:0000266"/>
    <property type="project" value="MGI"/>
</dbReference>
<dbReference type="GO" id="GO:0005102">
    <property type="term" value="F:signaling receptor binding"/>
    <property type="evidence" value="ECO:0000314"/>
    <property type="project" value="BHF-UCL"/>
</dbReference>
<dbReference type="GO" id="GO:0006953">
    <property type="term" value="P:acute-phase response"/>
    <property type="evidence" value="ECO:0000315"/>
    <property type="project" value="BHF-UCL"/>
</dbReference>
<dbReference type="GO" id="GO:0002752">
    <property type="term" value="P:cell surface pattern recognition receptor signaling pathway"/>
    <property type="evidence" value="ECO:0007669"/>
    <property type="project" value="Ensembl"/>
</dbReference>
<dbReference type="GO" id="GO:0071222">
    <property type="term" value="P:cellular response to lipopolysaccharide"/>
    <property type="evidence" value="ECO:0000315"/>
    <property type="project" value="UniProtKB"/>
</dbReference>
<dbReference type="GO" id="GO:0071223">
    <property type="term" value="P:cellular response to lipoteichoic acid"/>
    <property type="evidence" value="ECO:0000266"/>
    <property type="project" value="MGI"/>
</dbReference>
<dbReference type="GO" id="GO:0050829">
    <property type="term" value="P:defense response to Gram-negative bacterium"/>
    <property type="evidence" value="ECO:0000315"/>
    <property type="project" value="BHF-UCL"/>
</dbReference>
<dbReference type="GO" id="GO:0050830">
    <property type="term" value="P:defense response to Gram-positive bacterium"/>
    <property type="evidence" value="ECO:0000315"/>
    <property type="project" value="BHF-UCL"/>
</dbReference>
<dbReference type="GO" id="GO:0032490">
    <property type="term" value="P:detection of molecule of bacterial origin"/>
    <property type="evidence" value="ECO:0007669"/>
    <property type="project" value="Ensembl"/>
</dbReference>
<dbReference type="GO" id="GO:0045087">
    <property type="term" value="P:innate immune response"/>
    <property type="evidence" value="ECO:0000315"/>
    <property type="project" value="BHF-UCL"/>
</dbReference>
<dbReference type="GO" id="GO:0002232">
    <property type="term" value="P:leukocyte chemotaxis involved in inflammatory response"/>
    <property type="evidence" value="ECO:0000315"/>
    <property type="project" value="MGI"/>
</dbReference>
<dbReference type="GO" id="GO:0015920">
    <property type="term" value="P:lipopolysaccharide transport"/>
    <property type="evidence" value="ECO:0007669"/>
    <property type="project" value="Ensembl"/>
</dbReference>
<dbReference type="GO" id="GO:0031663">
    <property type="term" value="P:lipopolysaccharide-mediated signaling pathway"/>
    <property type="evidence" value="ECO:0007669"/>
    <property type="project" value="Ensembl"/>
</dbReference>
<dbReference type="GO" id="GO:0002281">
    <property type="term" value="P:macrophage activation involved in immune response"/>
    <property type="evidence" value="ECO:0000314"/>
    <property type="project" value="BHF-UCL"/>
</dbReference>
<dbReference type="GO" id="GO:0032720">
    <property type="term" value="P:negative regulation of tumor necrosis factor production"/>
    <property type="evidence" value="ECO:0007669"/>
    <property type="project" value="Ensembl"/>
</dbReference>
<dbReference type="GO" id="GO:0030593">
    <property type="term" value="P:neutrophil chemotaxis"/>
    <property type="evidence" value="ECO:0000315"/>
    <property type="project" value="MGI"/>
</dbReference>
<dbReference type="GO" id="GO:0008228">
    <property type="term" value="P:opsonization"/>
    <property type="evidence" value="ECO:0000305"/>
    <property type="project" value="BHF-UCL"/>
</dbReference>
<dbReference type="GO" id="GO:0032722">
    <property type="term" value="P:positive regulation of chemokine production"/>
    <property type="evidence" value="ECO:0000315"/>
    <property type="project" value="MGI"/>
</dbReference>
<dbReference type="GO" id="GO:0032755">
    <property type="term" value="P:positive regulation of interleukin-6 production"/>
    <property type="evidence" value="ECO:0007669"/>
    <property type="project" value="Ensembl"/>
</dbReference>
<dbReference type="GO" id="GO:0032757">
    <property type="term" value="P:positive regulation of interleukin-8 production"/>
    <property type="evidence" value="ECO:0007669"/>
    <property type="project" value="Ensembl"/>
</dbReference>
<dbReference type="GO" id="GO:0043032">
    <property type="term" value="P:positive regulation of macrophage activation"/>
    <property type="evidence" value="ECO:0007669"/>
    <property type="project" value="Ensembl"/>
</dbReference>
<dbReference type="GO" id="GO:0090023">
    <property type="term" value="P:positive regulation of neutrophil chemotaxis"/>
    <property type="evidence" value="ECO:0000315"/>
    <property type="project" value="MGI"/>
</dbReference>
<dbReference type="GO" id="GO:0060265">
    <property type="term" value="P:positive regulation of respiratory burst involved in inflammatory response"/>
    <property type="evidence" value="ECO:0000315"/>
    <property type="project" value="BHF-UCL"/>
</dbReference>
<dbReference type="GO" id="GO:0034145">
    <property type="term" value="P:positive regulation of toll-like receptor 4 signaling pathway"/>
    <property type="evidence" value="ECO:0007669"/>
    <property type="project" value="Ensembl"/>
</dbReference>
<dbReference type="GO" id="GO:0032760">
    <property type="term" value="P:positive regulation of tumor necrosis factor production"/>
    <property type="evidence" value="ECO:0000314"/>
    <property type="project" value="BHF-UCL"/>
</dbReference>
<dbReference type="GO" id="GO:0032496">
    <property type="term" value="P:response to lipopolysaccharide"/>
    <property type="evidence" value="ECO:0000315"/>
    <property type="project" value="BHF-UCL"/>
</dbReference>
<dbReference type="CDD" id="cd00025">
    <property type="entry name" value="BPI1"/>
    <property type="match status" value="1"/>
</dbReference>
<dbReference type="CDD" id="cd00026">
    <property type="entry name" value="BPI2"/>
    <property type="match status" value="1"/>
</dbReference>
<dbReference type="FunFam" id="3.15.20.10:FF:000001">
    <property type="entry name" value="Phospholipid transfer protein"/>
    <property type="match status" value="1"/>
</dbReference>
<dbReference type="FunFam" id="3.15.10.10:FF:000001">
    <property type="entry name" value="phospholipid transfer protein-like"/>
    <property type="match status" value="1"/>
</dbReference>
<dbReference type="Gene3D" id="3.15.10.10">
    <property type="entry name" value="Bactericidal permeability-increasing protein, domain 1"/>
    <property type="match status" value="1"/>
</dbReference>
<dbReference type="Gene3D" id="3.15.20.10">
    <property type="entry name" value="Bactericidal permeability-increasing protein, domain 2"/>
    <property type="match status" value="1"/>
</dbReference>
<dbReference type="InterPro" id="IPR017943">
    <property type="entry name" value="Bactericidal_perm-incr_a/b_dom"/>
</dbReference>
<dbReference type="InterPro" id="IPR030675">
    <property type="entry name" value="BPI/LBP"/>
</dbReference>
<dbReference type="InterPro" id="IPR032942">
    <property type="entry name" value="BPI/LBP/Plunc"/>
</dbReference>
<dbReference type="InterPro" id="IPR001124">
    <property type="entry name" value="Lipid-bd_serum_glycop_C"/>
</dbReference>
<dbReference type="InterPro" id="IPR017954">
    <property type="entry name" value="Lipid-bd_serum_glycop_CS"/>
</dbReference>
<dbReference type="InterPro" id="IPR017942">
    <property type="entry name" value="Lipid-bd_serum_glycop_N"/>
</dbReference>
<dbReference type="PANTHER" id="PTHR10504">
    <property type="entry name" value="BACTERICIDAL PERMEABILITY-INCREASING BPI PROTEIN-RELATED"/>
    <property type="match status" value="1"/>
</dbReference>
<dbReference type="PANTHER" id="PTHR10504:SF66">
    <property type="entry name" value="LIPOPOLYSACCHARIDE-BINDING PROTEIN"/>
    <property type="match status" value="1"/>
</dbReference>
<dbReference type="Pfam" id="PF01273">
    <property type="entry name" value="LBP_BPI_CETP"/>
    <property type="match status" value="1"/>
</dbReference>
<dbReference type="Pfam" id="PF02886">
    <property type="entry name" value="LBP_BPI_CETP_C"/>
    <property type="match status" value="1"/>
</dbReference>
<dbReference type="PIRSF" id="PIRSF002417">
    <property type="entry name" value="Lipid_binding_protein"/>
    <property type="match status" value="1"/>
</dbReference>
<dbReference type="SMART" id="SM00328">
    <property type="entry name" value="BPI1"/>
    <property type="match status" value="1"/>
</dbReference>
<dbReference type="SMART" id="SM00329">
    <property type="entry name" value="BPI2"/>
    <property type="match status" value="1"/>
</dbReference>
<dbReference type="SUPFAM" id="SSF55394">
    <property type="entry name" value="Bactericidal permeability-increasing protein, BPI"/>
    <property type="match status" value="2"/>
</dbReference>
<dbReference type="PROSITE" id="PS00400">
    <property type="entry name" value="LBP_BPI_CETP"/>
    <property type="match status" value="1"/>
</dbReference>
<accession>Q61805</accession>
<accession>A2AC66</accession>
<accession>Q99KA0</accession>
<sequence>MKAGTGPLLSTLLGLLFLSIQGTGGVNPGVVARITDKGLAYAAKEGLVALQRELYKITLPDFSGDFKIKAVGRGQYEFHSLEIQNCELRGSSLKLLPGQGLSLAISDSSIGVRGKWKVRKSFLKLHGSFDLDVKGVTISVDLLLGMDPSGRPTVSASGCSSRICDLDVHISGNVGWLLNLFHNQIESKLQKVLENKVCEMIQKSVTSDLQPYLQTLPVTAEIDNVLGIDYSLVAAPQAKAQVLDVMFKGEIFNRNHRSPVATPTPTMSLPEDSKQMVYFAISDYAFNIASRVYHQAGYLNFSITDDMLPHDSGIRLNTKAFRPFTPQIYKKYPDMKLELLGTVVSAPILNVSPGNLSLAPQMEIEGFVILPTSAREPVFRLGVVTNVFASLTFNNSKVTGMLHPDKAQVRLIESKVGMFNVNLFQAFLNYYLLNSLYPDVNAELAQGFPLPLPRHIQLHDLDFQIRKDFLYLGANVQYMRV</sequence>
<name>LBP_MOUSE</name>
<comment type="function">
    <text evidence="2 5 6">Plays a role in the innate immune response. Binds to the lipid A moiety of bacterial lipopolysaccharides (LPS), a glycolipid present in the outer membrane of all Gram-negative bacteria (PubMed:9144073). Acts as an affinity enhancer for CD14, facilitating its association with LPS (By similarity). Promotes the release of cytokines in response to bacterial lipopolysaccharide (PubMed:24380872).</text>
</comment>
<comment type="subunit">
    <text evidence="2">When bound to LPS, interacts (via C-terminus) with soluble and membrane-bound CD14.</text>
</comment>
<comment type="subcellular location">
    <subcellularLocation>
        <location evidence="2">Secreted</location>
    </subcellularLocation>
    <subcellularLocation>
        <location evidence="1">Cytoplasmic granule membrane</location>
    </subcellularLocation>
    <text evidence="1">Membrane-associated in polymorphonuclear Leukocytes (PMN) granules.</text>
</comment>
<comment type="similarity">
    <text evidence="7">Belongs to the BPI/LBP/Plunc superfamily. BPI/LBP family.</text>
</comment>
<gene>
    <name type="primary">Lbp</name>
</gene>
<organism>
    <name type="scientific">Mus musculus</name>
    <name type="common">Mouse</name>
    <dbReference type="NCBI Taxonomy" id="10090"/>
    <lineage>
        <taxon>Eukaryota</taxon>
        <taxon>Metazoa</taxon>
        <taxon>Chordata</taxon>
        <taxon>Craniata</taxon>
        <taxon>Vertebrata</taxon>
        <taxon>Euteleostomi</taxon>
        <taxon>Mammalia</taxon>
        <taxon>Eutheria</taxon>
        <taxon>Euarchontoglires</taxon>
        <taxon>Glires</taxon>
        <taxon>Rodentia</taxon>
        <taxon>Myomorpha</taxon>
        <taxon>Muroidea</taxon>
        <taxon>Muridae</taxon>
        <taxon>Murinae</taxon>
        <taxon>Mus</taxon>
        <taxon>Mus</taxon>
    </lineage>
</organism>
<keyword id="KW-0002">3D-structure</keyword>
<keyword id="KW-0044">Antibiotic</keyword>
<keyword id="KW-0929">Antimicrobial</keyword>
<keyword id="KW-1015">Disulfide bond</keyword>
<keyword id="KW-0325">Glycoprotein</keyword>
<keyword id="KW-0391">Immunity</keyword>
<keyword id="KW-0399">Innate immunity</keyword>
<keyword id="KW-0445">Lipid transport</keyword>
<keyword id="KW-0472">Membrane</keyword>
<keyword id="KW-1185">Reference proteome</keyword>
<keyword id="KW-0964">Secreted</keyword>
<keyword id="KW-0732">Signal</keyword>
<keyword id="KW-0813">Transport</keyword>
<evidence type="ECO:0000250" key="1">
    <source>
        <dbReference type="UniProtKB" id="P17213"/>
    </source>
</evidence>
<evidence type="ECO:0000250" key="2">
    <source>
        <dbReference type="UniProtKB" id="P18428"/>
    </source>
</evidence>
<evidence type="ECO:0000255" key="3"/>
<evidence type="ECO:0000269" key="4">
    <source>
    </source>
</evidence>
<evidence type="ECO:0000269" key="5">
    <source>
    </source>
</evidence>
<evidence type="ECO:0000269" key="6">
    <source>
    </source>
</evidence>
<evidence type="ECO:0000305" key="7"/>
<evidence type="ECO:0007744" key="8">
    <source>
        <dbReference type="PDB" id="4M4D"/>
    </source>
</evidence>
<evidence type="ECO:0007829" key="9">
    <source>
        <dbReference type="PDB" id="4M4D"/>
    </source>
</evidence>
<reference key="1">
    <citation type="journal article" date="1995" name="J. Inflamm.">
        <title>Reactivity of murine and human recombinant LPS-binding protein (LBP) within LPS and Gram-negative bacteria.</title>
        <authorList>
            <person name="Lengacher S."/>
            <person name="Jongeneel C.V."/>
            <person name="le Roy D."/>
            <person name="Lee J.D."/>
            <person name="Kravchenko V."/>
            <person name="Ulevitch R.J."/>
            <person name="Glauser M.P."/>
            <person name="Heumann D."/>
        </authorList>
    </citation>
    <scope>NUCLEOTIDE SEQUENCE [MRNA]</scope>
    <scope>FUNCTION</scope>
    <source>
        <strain>BALB/cJ</strain>
    </source>
</reference>
<reference key="2">
    <citation type="journal article" date="2009" name="PLoS Biol.">
        <title>Lineage-specific biology revealed by a finished genome assembly of the mouse.</title>
        <authorList>
            <person name="Church D.M."/>
            <person name="Goodstadt L."/>
            <person name="Hillier L.W."/>
            <person name="Zody M.C."/>
            <person name="Goldstein S."/>
            <person name="She X."/>
            <person name="Bult C.J."/>
            <person name="Agarwala R."/>
            <person name="Cherry J.L."/>
            <person name="DiCuccio M."/>
            <person name="Hlavina W."/>
            <person name="Kapustin Y."/>
            <person name="Meric P."/>
            <person name="Maglott D."/>
            <person name="Birtle Z."/>
            <person name="Marques A.C."/>
            <person name="Graves T."/>
            <person name="Zhou S."/>
            <person name="Teague B."/>
            <person name="Potamousis K."/>
            <person name="Churas C."/>
            <person name="Place M."/>
            <person name="Herschleb J."/>
            <person name="Runnheim R."/>
            <person name="Forrest D."/>
            <person name="Amos-Landgraf J."/>
            <person name="Schwartz D.C."/>
            <person name="Cheng Z."/>
            <person name="Lindblad-Toh K."/>
            <person name="Eichler E.E."/>
            <person name="Ponting C.P."/>
        </authorList>
    </citation>
    <scope>NUCLEOTIDE SEQUENCE [LARGE SCALE GENOMIC DNA]</scope>
    <source>
        <strain>C57BL/6J</strain>
    </source>
</reference>
<reference key="3">
    <citation type="submission" date="2005-07" db="EMBL/GenBank/DDBJ databases">
        <authorList>
            <person name="Mural R.J."/>
            <person name="Adams M.D."/>
            <person name="Myers E.W."/>
            <person name="Smith H.O."/>
            <person name="Venter J.C."/>
        </authorList>
    </citation>
    <scope>NUCLEOTIDE SEQUENCE [LARGE SCALE GENOMIC DNA]</scope>
</reference>
<reference key="4">
    <citation type="journal article" date="2004" name="Genome Res.">
        <title>The status, quality, and expansion of the NIH full-length cDNA project: the Mammalian Gene Collection (MGC).</title>
        <authorList>
            <consortium name="The MGC Project Team"/>
        </authorList>
    </citation>
    <scope>NUCLEOTIDE SEQUENCE [LARGE SCALE MRNA]</scope>
</reference>
<reference key="5">
    <citation type="journal article" date="2014" name="Int. Immunol.">
        <title>The attenuated inflammation of MPL is due to the lack of CD14-dependent tight dimerization of the TLR4/MD2 complex at the plasma membrane.</title>
        <authorList>
            <person name="Tanimura N."/>
            <person name="Saitoh S."/>
            <person name="Ohto U."/>
            <person name="Akashi-Takamura S."/>
            <person name="Fujimoto Y."/>
            <person name="Fukase K."/>
            <person name="Shimizu T."/>
            <person name="Miyake K."/>
        </authorList>
    </citation>
    <scope>FUNCTION</scope>
</reference>
<reference key="6">
    <citation type="journal article" date="2013" name="Immunity">
        <title>The crystal structure of lipopolysaccharide binding protein reveals the location of a frequent mutation that impairs innate immunity.</title>
        <authorList>
            <person name="Eckert J.K."/>
            <person name="Kim Y.J."/>
            <person name="Kim J.I."/>
            <person name="Guertler K."/>
            <person name="Oh D.Y."/>
            <person name="Sur S."/>
            <person name="Lundvall L."/>
            <person name="Hamann L."/>
            <person name="van der Ploeg A."/>
            <person name="Pickkers P."/>
            <person name="Giamarellos-Bourboulis E."/>
            <person name="Kubarenko A.V."/>
            <person name="Weber A.N."/>
            <person name="Kabesch M."/>
            <person name="Kumpf O."/>
            <person name="An H.J."/>
            <person name="Lee J.O."/>
            <person name="Schumann R.R."/>
        </authorList>
    </citation>
    <scope>X-RAY CRYSTALLOGRAPHY (2.91 ANGSTROMS)</scope>
    <scope>DISULFIDE BOND</scope>
</reference>